<reference key="1">
    <citation type="journal article" date="1996" name="Science">
        <title>Complete genome sequence of the methanogenic archaeon, Methanococcus jannaschii.</title>
        <authorList>
            <person name="Bult C.J."/>
            <person name="White O."/>
            <person name="Olsen G.J."/>
            <person name="Zhou L."/>
            <person name="Fleischmann R.D."/>
            <person name="Sutton G.G."/>
            <person name="Blake J.A."/>
            <person name="FitzGerald L.M."/>
            <person name="Clayton R.A."/>
            <person name="Gocayne J.D."/>
            <person name="Kerlavage A.R."/>
            <person name="Dougherty B.A."/>
            <person name="Tomb J.-F."/>
            <person name="Adams M.D."/>
            <person name="Reich C.I."/>
            <person name="Overbeek R."/>
            <person name="Kirkness E.F."/>
            <person name="Weinstock K.G."/>
            <person name="Merrick J.M."/>
            <person name="Glodek A."/>
            <person name="Scott J.L."/>
            <person name="Geoghagen N.S.M."/>
            <person name="Weidman J.F."/>
            <person name="Fuhrmann J.L."/>
            <person name="Nguyen D."/>
            <person name="Utterback T.R."/>
            <person name="Kelley J.M."/>
            <person name="Peterson J.D."/>
            <person name="Sadow P.W."/>
            <person name="Hanna M.C."/>
            <person name="Cotton M.D."/>
            <person name="Roberts K.M."/>
            <person name="Hurst M.A."/>
            <person name="Kaine B.P."/>
            <person name="Borodovsky M."/>
            <person name="Klenk H.-P."/>
            <person name="Fraser C.M."/>
            <person name="Smith H.O."/>
            <person name="Woese C.R."/>
            <person name="Venter J.C."/>
        </authorList>
    </citation>
    <scope>NUCLEOTIDE SEQUENCE [LARGE SCALE GENOMIC DNA]</scope>
    <source>
        <strain>ATCC 43067 / DSM 2661 / JAL-1 / JCM 10045 / NBRC 100440</strain>
    </source>
</reference>
<dbReference type="EC" id="1.97.1.-" evidence="1"/>
<dbReference type="EMBL" id="L77117">
    <property type="protein sequence ID" value="AAB99653.1"/>
    <property type="molecule type" value="Genomic_DNA"/>
</dbReference>
<dbReference type="PIR" id="F64503">
    <property type="entry name" value="F64503"/>
</dbReference>
<dbReference type="SMR" id="Q59026"/>
<dbReference type="STRING" id="243232.MJ_1632"/>
<dbReference type="PaxDb" id="243232-MJ_1632"/>
<dbReference type="EnsemblBacteria" id="AAB99653">
    <property type="protein sequence ID" value="AAB99653"/>
    <property type="gene ID" value="MJ_1632"/>
</dbReference>
<dbReference type="KEGG" id="mja:MJ_1632"/>
<dbReference type="eggNOG" id="arCOG00954">
    <property type="taxonomic scope" value="Archaea"/>
</dbReference>
<dbReference type="HOGENOM" id="CLU_1217571_0_0_2"/>
<dbReference type="InParanoid" id="Q59026"/>
<dbReference type="OrthoDB" id="371936at2157"/>
<dbReference type="PhylomeDB" id="Q59026"/>
<dbReference type="Proteomes" id="UP000000805">
    <property type="component" value="Chromosome"/>
</dbReference>
<dbReference type="GO" id="GO:0051539">
    <property type="term" value="F:4 iron, 4 sulfur cluster binding"/>
    <property type="evidence" value="ECO:0007669"/>
    <property type="project" value="UniProtKB-KW"/>
</dbReference>
<dbReference type="GO" id="GO:0046872">
    <property type="term" value="F:metal ion binding"/>
    <property type="evidence" value="ECO:0007669"/>
    <property type="project" value="UniProtKB-KW"/>
</dbReference>
<dbReference type="GO" id="GO:0016491">
    <property type="term" value="F:oxidoreductase activity"/>
    <property type="evidence" value="ECO:0007669"/>
    <property type="project" value="UniProtKB-KW"/>
</dbReference>
<dbReference type="CDD" id="cd01335">
    <property type="entry name" value="Radical_SAM"/>
    <property type="match status" value="1"/>
</dbReference>
<dbReference type="FunFam" id="3.20.20.70:FF:000499">
    <property type="match status" value="1"/>
</dbReference>
<dbReference type="Gene3D" id="3.20.20.70">
    <property type="entry name" value="Aldolase class I"/>
    <property type="match status" value="1"/>
</dbReference>
<dbReference type="InterPro" id="IPR013785">
    <property type="entry name" value="Aldolase_TIM"/>
</dbReference>
<dbReference type="InterPro" id="IPR001989">
    <property type="entry name" value="Radical_activat_CS"/>
</dbReference>
<dbReference type="InterPro" id="IPR050377">
    <property type="entry name" value="Radical_SAM_PqqE_MftC-like"/>
</dbReference>
<dbReference type="InterPro" id="IPR007197">
    <property type="entry name" value="rSAM"/>
</dbReference>
<dbReference type="PANTHER" id="PTHR11228:SF27">
    <property type="entry name" value="GLYCYL-RADICAL ENZYME ACTIVATING ENZYME MJ1227-RELATED"/>
    <property type="match status" value="1"/>
</dbReference>
<dbReference type="PANTHER" id="PTHR11228">
    <property type="entry name" value="RADICAL SAM DOMAIN PROTEIN"/>
    <property type="match status" value="1"/>
</dbReference>
<dbReference type="Pfam" id="PF13353">
    <property type="entry name" value="Fer4_12"/>
    <property type="match status" value="1"/>
</dbReference>
<dbReference type="Pfam" id="PF04055">
    <property type="entry name" value="Radical_SAM"/>
    <property type="match status" value="1"/>
</dbReference>
<dbReference type="SFLD" id="SFLDS00029">
    <property type="entry name" value="Radical_SAM"/>
    <property type="match status" value="1"/>
</dbReference>
<dbReference type="SFLD" id="SFLDG01067">
    <property type="entry name" value="SPASM/twitch_domain_containing"/>
    <property type="match status" value="1"/>
</dbReference>
<dbReference type="SUPFAM" id="SSF102114">
    <property type="entry name" value="Radical SAM enzymes"/>
    <property type="match status" value="1"/>
</dbReference>
<dbReference type="PROSITE" id="PS01087">
    <property type="entry name" value="RADICAL_ACTIVATING"/>
    <property type="match status" value="1"/>
</dbReference>
<dbReference type="PROSITE" id="PS51918">
    <property type="entry name" value="RADICAL_SAM"/>
    <property type="match status" value="1"/>
</dbReference>
<name>Y1632_METJA</name>
<accession>Q59026</accession>
<keyword id="KW-0004">4Fe-4S</keyword>
<keyword id="KW-0408">Iron</keyword>
<keyword id="KW-0411">Iron-sulfur</keyword>
<keyword id="KW-0479">Metal-binding</keyword>
<keyword id="KW-0560">Oxidoreductase</keyword>
<keyword id="KW-1185">Reference proteome</keyword>
<keyword id="KW-0949">S-adenosyl-L-methionine</keyword>
<organism>
    <name type="scientific">Methanocaldococcus jannaschii (strain ATCC 43067 / DSM 2661 / JAL-1 / JCM 10045 / NBRC 100440)</name>
    <name type="common">Methanococcus jannaschii</name>
    <dbReference type="NCBI Taxonomy" id="243232"/>
    <lineage>
        <taxon>Archaea</taxon>
        <taxon>Methanobacteriati</taxon>
        <taxon>Methanobacteriota</taxon>
        <taxon>Methanomada group</taxon>
        <taxon>Methanococci</taxon>
        <taxon>Methanococcales</taxon>
        <taxon>Methanocaldococcaceae</taxon>
        <taxon>Methanocaldococcus</taxon>
    </lineage>
</organism>
<gene>
    <name type="ordered locus">MJ1632</name>
</gene>
<feature type="chain" id="PRO_0000200546" description="Putative glycyl-radical enzyme activating enzyme MJ1632">
    <location>
        <begin position="1"/>
        <end position="255"/>
    </location>
</feature>
<feature type="domain" description="Radical SAM core" evidence="2">
    <location>
        <begin position="30"/>
        <end position="245"/>
    </location>
</feature>
<feature type="binding site" evidence="1">
    <location>
        <position position="45"/>
    </location>
    <ligand>
        <name>[4Fe-4S] cluster</name>
        <dbReference type="ChEBI" id="CHEBI:49883"/>
        <note>4Fe-4S-S-AdoMet</note>
    </ligand>
</feature>
<feature type="binding site" evidence="1">
    <location>
        <position position="49"/>
    </location>
    <ligand>
        <name>[4Fe-4S] cluster</name>
        <dbReference type="ChEBI" id="CHEBI:49883"/>
        <note>4Fe-4S-S-AdoMet</note>
    </ligand>
</feature>
<feature type="binding site" evidence="1">
    <location>
        <begin position="51"/>
        <end position="53"/>
    </location>
    <ligand>
        <name>S-adenosyl-L-methionine</name>
        <dbReference type="ChEBI" id="CHEBI:59789"/>
    </ligand>
</feature>
<feature type="binding site" evidence="1">
    <location>
        <position position="52"/>
    </location>
    <ligand>
        <name>[4Fe-4S] cluster</name>
        <dbReference type="ChEBI" id="CHEBI:49883"/>
        <note>4Fe-4S-S-AdoMet</note>
    </ligand>
</feature>
<feature type="binding site" evidence="1">
    <location>
        <position position="88"/>
    </location>
    <ligand>
        <name>S-adenosyl-L-methionine</name>
        <dbReference type="ChEBI" id="CHEBI:59789"/>
    </ligand>
</feature>
<feature type="binding site" evidence="1">
    <location>
        <begin position="134"/>
        <end position="136"/>
    </location>
    <ligand>
        <name>S-adenosyl-L-methionine</name>
        <dbReference type="ChEBI" id="CHEBI:59789"/>
    </ligand>
</feature>
<proteinExistence type="inferred from homology"/>
<sequence>MLNTLMLREWLRSMLRSCISKIFGDLMLISHISLSDKITLLTYGCNFKCKYCFFKPLSCKKYSVDEILNKILEVNENYKLDKILIAGGEPTLQNDLSELTKLLKDEGFYLMLSTNGYYLKDMLDKLEVDEIHIDLKAYDENKHIYLTSCSNKKVLDCISYIGKYRDEFNFKVEIDTVLIPNIVDLDEIEKIAKFLSNWDLPYRITGYVKYNNNLNAEKPDEDKILKAKEIALKYLSNVSCSLDFKRHKKSKKVII</sequence>
<evidence type="ECO:0000250" key="1">
    <source>
        <dbReference type="UniProtKB" id="P0A9N4"/>
    </source>
</evidence>
<evidence type="ECO:0000255" key="2">
    <source>
        <dbReference type="PROSITE-ProRule" id="PRU01266"/>
    </source>
</evidence>
<evidence type="ECO:0000305" key="3"/>
<comment type="catalytic activity">
    <reaction evidence="1">
        <text>glycyl-[protein] + reduced [flavodoxin] + S-adenosyl-L-methionine = glycin-2-yl radical-[protein] + semiquinone [flavodoxin] + 5'-deoxyadenosine + L-methionine + H(+)</text>
        <dbReference type="Rhea" id="RHEA:61976"/>
        <dbReference type="Rhea" id="RHEA-COMP:10622"/>
        <dbReference type="Rhea" id="RHEA-COMP:14480"/>
        <dbReference type="Rhea" id="RHEA-COMP:15993"/>
        <dbReference type="Rhea" id="RHEA-COMP:15994"/>
        <dbReference type="ChEBI" id="CHEBI:15378"/>
        <dbReference type="ChEBI" id="CHEBI:17319"/>
        <dbReference type="ChEBI" id="CHEBI:29947"/>
        <dbReference type="ChEBI" id="CHEBI:32722"/>
        <dbReference type="ChEBI" id="CHEBI:57618"/>
        <dbReference type="ChEBI" id="CHEBI:57844"/>
        <dbReference type="ChEBI" id="CHEBI:59789"/>
        <dbReference type="ChEBI" id="CHEBI:140311"/>
    </reaction>
</comment>
<comment type="cofactor">
    <cofactor evidence="1">
        <name>[4Fe-4S] cluster</name>
        <dbReference type="ChEBI" id="CHEBI:49883"/>
    </cofactor>
    <text evidence="1">Binds 1 [4Fe-4S] cluster. The cluster is coordinated with 3 cysteines and an exchangeable S-adenosyl-L-methionine.</text>
</comment>
<comment type="similarity">
    <text evidence="3">Belongs to the organic radical-activating enzymes family.</text>
</comment>
<protein>
    <recommendedName>
        <fullName evidence="3">Putative glycyl-radical enzyme activating enzyme MJ1632</fullName>
        <shortName evidence="3">GRE activating enzyme MJ1632</shortName>
        <ecNumber evidence="1">1.97.1.-</ecNumber>
    </recommendedName>
</protein>